<proteinExistence type="inferred from homology"/>
<protein>
    <recommendedName>
        <fullName evidence="1">Glutamate-1-semialdehyde 2,1-aminomutase</fullName>
        <shortName evidence="1">GSA</shortName>
        <ecNumber evidence="1">5.4.3.8</ecNumber>
    </recommendedName>
    <alternativeName>
        <fullName evidence="1">Glutamate-1-semialdehyde aminotransferase</fullName>
        <shortName evidence="1">GSA-AT</shortName>
    </alternativeName>
</protein>
<name>GSA_SALPA</name>
<feature type="chain" id="PRO_0000120436" description="Glutamate-1-semialdehyde 2,1-aminomutase">
    <location>
        <begin position="1"/>
        <end position="426"/>
    </location>
</feature>
<feature type="modified residue" description="N6-(pyridoxal phosphate)lysine" evidence="1">
    <location>
        <position position="265"/>
    </location>
</feature>
<reference key="1">
    <citation type="journal article" date="2004" name="Nat. Genet.">
        <title>Comparison of genome degradation in Paratyphi A and Typhi, human-restricted serovars of Salmonella enterica that cause typhoid.</title>
        <authorList>
            <person name="McClelland M."/>
            <person name="Sanderson K.E."/>
            <person name="Clifton S.W."/>
            <person name="Latreille P."/>
            <person name="Porwollik S."/>
            <person name="Sabo A."/>
            <person name="Meyer R."/>
            <person name="Bieri T."/>
            <person name="Ozersky P."/>
            <person name="McLellan M."/>
            <person name="Harkins C.R."/>
            <person name="Wang C."/>
            <person name="Nguyen C."/>
            <person name="Berghoff A."/>
            <person name="Elliott G."/>
            <person name="Kohlberg S."/>
            <person name="Strong C."/>
            <person name="Du F."/>
            <person name="Carter J."/>
            <person name="Kremizki C."/>
            <person name="Layman D."/>
            <person name="Leonard S."/>
            <person name="Sun H."/>
            <person name="Fulton L."/>
            <person name="Nash W."/>
            <person name="Miner T."/>
            <person name="Minx P."/>
            <person name="Delehaunty K."/>
            <person name="Fronick C."/>
            <person name="Magrini V."/>
            <person name="Nhan M."/>
            <person name="Warren W."/>
            <person name="Florea L."/>
            <person name="Spieth J."/>
            <person name="Wilson R.K."/>
        </authorList>
    </citation>
    <scope>NUCLEOTIDE SEQUENCE [LARGE SCALE GENOMIC DNA]</scope>
    <source>
        <strain>ATCC 9150 / SARB42</strain>
    </source>
</reference>
<accession>Q5PD43</accession>
<comment type="catalytic activity">
    <reaction evidence="1">
        <text>(S)-4-amino-5-oxopentanoate = 5-aminolevulinate</text>
        <dbReference type="Rhea" id="RHEA:14265"/>
        <dbReference type="ChEBI" id="CHEBI:57501"/>
        <dbReference type="ChEBI" id="CHEBI:356416"/>
        <dbReference type="EC" id="5.4.3.8"/>
    </reaction>
</comment>
<comment type="cofactor">
    <cofactor evidence="1">
        <name>pyridoxal 5'-phosphate</name>
        <dbReference type="ChEBI" id="CHEBI:597326"/>
    </cofactor>
</comment>
<comment type="pathway">
    <text evidence="1">Porphyrin-containing compound metabolism; protoporphyrin-IX biosynthesis; 5-aminolevulinate from L-glutamyl-tRNA(Glu): step 2/2.</text>
</comment>
<comment type="subunit">
    <text evidence="1">Homodimer.</text>
</comment>
<comment type="subcellular location">
    <subcellularLocation>
        <location evidence="1">Cytoplasm</location>
    </subcellularLocation>
</comment>
<comment type="similarity">
    <text evidence="1">Belongs to the class-III pyridoxal-phosphate-dependent aminotransferase family. HemL subfamily.</text>
</comment>
<keyword id="KW-0963">Cytoplasm</keyword>
<keyword id="KW-0413">Isomerase</keyword>
<keyword id="KW-0627">Porphyrin biosynthesis</keyword>
<keyword id="KW-0663">Pyridoxal phosphate</keyword>
<evidence type="ECO:0000255" key="1">
    <source>
        <dbReference type="HAMAP-Rule" id="MF_00375"/>
    </source>
</evidence>
<gene>
    <name evidence="1" type="primary">hemL</name>
    <name type="ordered locus">SPA0208</name>
</gene>
<dbReference type="EC" id="5.4.3.8" evidence="1"/>
<dbReference type="EMBL" id="CP000026">
    <property type="protein sequence ID" value="AAV76238.1"/>
    <property type="molecule type" value="Genomic_DNA"/>
</dbReference>
<dbReference type="RefSeq" id="WP_000045258.1">
    <property type="nucleotide sequence ID" value="NC_006511.1"/>
</dbReference>
<dbReference type="SMR" id="Q5PD43"/>
<dbReference type="KEGG" id="spt:SPA0208"/>
<dbReference type="HOGENOM" id="CLU_016922_1_5_6"/>
<dbReference type="UniPathway" id="UPA00251">
    <property type="reaction ID" value="UER00317"/>
</dbReference>
<dbReference type="Proteomes" id="UP000008185">
    <property type="component" value="Chromosome"/>
</dbReference>
<dbReference type="GO" id="GO:0005737">
    <property type="term" value="C:cytoplasm"/>
    <property type="evidence" value="ECO:0007669"/>
    <property type="project" value="UniProtKB-SubCell"/>
</dbReference>
<dbReference type="GO" id="GO:0042286">
    <property type="term" value="F:glutamate-1-semialdehyde 2,1-aminomutase activity"/>
    <property type="evidence" value="ECO:0007669"/>
    <property type="project" value="UniProtKB-UniRule"/>
</dbReference>
<dbReference type="GO" id="GO:0030170">
    <property type="term" value="F:pyridoxal phosphate binding"/>
    <property type="evidence" value="ECO:0007669"/>
    <property type="project" value="InterPro"/>
</dbReference>
<dbReference type="GO" id="GO:0008483">
    <property type="term" value="F:transaminase activity"/>
    <property type="evidence" value="ECO:0007669"/>
    <property type="project" value="InterPro"/>
</dbReference>
<dbReference type="GO" id="GO:0006782">
    <property type="term" value="P:protoporphyrinogen IX biosynthetic process"/>
    <property type="evidence" value="ECO:0007669"/>
    <property type="project" value="UniProtKB-UniRule"/>
</dbReference>
<dbReference type="CDD" id="cd00610">
    <property type="entry name" value="OAT_like"/>
    <property type="match status" value="1"/>
</dbReference>
<dbReference type="FunFam" id="3.40.640.10:FF:000021">
    <property type="entry name" value="Glutamate-1-semialdehyde 2,1-aminomutase"/>
    <property type="match status" value="1"/>
</dbReference>
<dbReference type="FunFam" id="3.90.1150.10:FF:000012">
    <property type="entry name" value="Glutamate-1-semialdehyde 2,1-aminomutase"/>
    <property type="match status" value="1"/>
</dbReference>
<dbReference type="Gene3D" id="3.90.1150.10">
    <property type="entry name" value="Aspartate Aminotransferase, domain 1"/>
    <property type="match status" value="1"/>
</dbReference>
<dbReference type="Gene3D" id="3.40.640.10">
    <property type="entry name" value="Type I PLP-dependent aspartate aminotransferase-like (Major domain)"/>
    <property type="match status" value="1"/>
</dbReference>
<dbReference type="HAMAP" id="MF_00375">
    <property type="entry name" value="HemL_aminotrans_3"/>
    <property type="match status" value="1"/>
</dbReference>
<dbReference type="InterPro" id="IPR004639">
    <property type="entry name" value="4pyrrol_synth_GluAld_NH2Trfase"/>
</dbReference>
<dbReference type="InterPro" id="IPR005814">
    <property type="entry name" value="Aminotrans_3"/>
</dbReference>
<dbReference type="InterPro" id="IPR049704">
    <property type="entry name" value="Aminotrans_3_PPA_site"/>
</dbReference>
<dbReference type="InterPro" id="IPR015424">
    <property type="entry name" value="PyrdxlP-dep_Trfase"/>
</dbReference>
<dbReference type="InterPro" id="IPR015421">
    <property type="entry name" value="PyrdxlP-dep_Trfase_major"/>
</dbReference>
<dbReference type="InterPro" id="IPR015422">
    <property type="entry name" value="PyrdxlP-dep_Trfase_small"/>
</dbReference>
<dbReference type="NCBIfam" id="TIGR00713">
    <property type="entry name" value="hemL"/>
    <property type="match status" value="1"/>
</dbReference>
<dbReference type="NCBIfam" id="NF000818">
    <property type="entry name" value="PRK00062.1"/>
    <property type="match status" value="1"/>
</dbReference>
<dbReference type="PANTHER" id="PTHR43713">
    <property type="entry name" value="GLUTAMATE-1-SEMIALDEHYDE 2,1-AMINOMUTASE"/>
    <property type="match status" value="1"/>
</dbReference>
<dbReference type="PANTHER" id="PTHR43713:SF3">
    <property type="entry name" value="GLUTAMATE-1-SEMIALDEHYDE 2,1-AMINOMUTASE 1, CHLOROPLASTIC-RELATED"/>
    <property type="match status" value="1"/>
</dbReference>
<dbReference type="Pfam" id="PF00202">
    <property type="entry name" value="Aminotran_3"/>
    <property type="match status" value="1"/>
</dbReference>
<dbReference type="SUPFAM" id="SSF53383">
    <property type="entry name" value="PLP-dependent transferases"/>
    <property type="match status" value="1"/>
</dbReference>
<dbReference type="PROSITE" id="PS00600">
    <property type="entry name" value="AA_TRANSFER_CLASS_3"/>
    <property type="match status" value="1"/>
</dbReference>
<organism>
    <name type="scientific">Salmonella paratyphi A (strain ATCC 9150 / SARB42)</name>
    <dbReference type="NCBI Taxonomy" id="295319"/>
    <lineage>
        <taxon>Bacteria</taxon>
        <taxon>Pseudomonadati</taxon>
        <taxon>Pseudomonadota</taxon>
        <taxon>Gammaproteobacteria</taxon>
        <taxon>Enterobacterales</taxon>
        <taxon>Enterobacteriaceae</taxon>
        <taxon>Salmonella</taxon>
    </lineage>
</organism>
<sequence length="426" mass="45367">MSKSENLYSAARELIPGGVNSPVRAFTGVGGTPLFIEKADGAYLYDVDGKAYIDYVGSWGPMVLGHNHPAIRNAVIEAAERGLSFGAPTEMEVKMAELVTNLVPTMDMVRMVNSGTEATMSAIRLARGFTGRDKIIKFEGCYHGHADCLLVKAGSGALTLGQPNSPGVPADFAKHTLTCTYNDLTSVRAAFEQYPQEIACIIVEPVAGNMNCVPPLPEFLPGLRALCDEFGALLIIDEVMTGFRVALAGAQDYYGVVPDLTCLGKIIGGGMPVGAFGGRRDVMDALAPTGPVYQAGTLSGNPIAMAAGFACLNEVAQPGIHETLDELTTRLAEGLCEAAQEAGIPLVVNHVGGMFGIFFTDAETVTCYQDVMACDVERFKRFFHLMLEEGVYLAPSAFEAGFMSVAHSEEDINNTIDAARRVFAKL</sequence>